<proteinExistence type="inferred from homology"/>
<dbReference type="EC" id="2.1.3.15" evidence="1"/>
<dbReference type="EMBL" id="AM263198">
    <property type="protein sequence ID" value="CAK21003.1"/>
    <property type="molecule type" value="Genomic_DNA"/>
</dbReference>
<dbReference type="RefSeq" id="WP_011702370.1">
    <property type="nucleotide sequence ID" value="NC_008555.1"/>
</dbReference>
<dbReference type="SMR" id="A0AJ21"/>
<dbReference type="STRING" id="386043.lwe1585"/>
<dbReference type="GeneID" id="61189462"/>
<dbReference type="KEGG" id="lwe:lwe1585"/>
<dbReference type="eggNOG" id="COG0825">
    <property type="taxonomic scope" value="Bacteria"/>
</dbReference>
<dbReference type="HOGENOM" id="CLU_015486_0_2_9"/>
<dbReference type="OrthoDB" id="9808023at2"/>
<dbReference type="UniPathway" id="UPA00655">
    <property type="reaction ID" value="UER00711"/>
</dbReference>
<dbReference type="Proteomes" id="UP000000779">
    <property type="component" value="Chromosome"/>
</dbReference>
<dbReference type="GO" id="GO:0009317">
    <property type="term" value="C:acetyl-CoA carboxylase complex"/>
    <property type="evidence" value="ECO:0007669"/>
    <property type="project" value="InterPro"/>
</dbReference>
<dbReference type="GO" id="GO:0003989">
    <property type="term" value="F:acetyl-CoA carboxylase activity"/>
    <property type="evidence" value="ECO:0007669"/>
    <property type="project" value="InterPro"/>
</dbReference>
<dbReference type="GO" id="GO:0005524">
    <property type="term" value="F:ATP binding"/>
    <property type="evidence" value="ECO:0007669"/>
    <property type="project" value="UniProtKB-KW"/>
</dbReference>
<dbReference type="GO" id="GO:0016743">
    <property type="term" value="F:carboxyl- or carbamoyltransferase activity"/>
    <property type="evidence" value="ECO:0007669"/>
    <property type="project" value="UniProtKB-UniRule"/>
</dbReference>
<dbReference type="GO" id="GO:0006633">
    <property type="term" value="P:fatty acid biosynthetic process"/>
    <property type="evidence" value="ECO:0007669"/>
    <property type="project" value="UniProtKB-KW"/>
</dbReference>
<dbReference type="GO" id="GO:2001295">
    <property type="term" value="P:malonyl-CoA biosynthetic process"/>
    <property type="evidence" value="ECO:0007669"/>
    <property type="project" value="UniProtKB-UniRule"/>
</dbReference>
<dbReference type="Gene3D" id="3.90.226.10">
    <property type="entry name" value="2-enoyl-CoA Hydratase, Chain A, domain 1"/>
    <property type="match status" value="1"/>
</dbReference>
<dbReference type="HAMAP" id="MF_00823">
    <property type="entry name" value="AcetylCoA_CT_alpha"/>
    <property type="match status" value="1"/>
</dbReference>
<dbReference type="InterPro" id="IPR001095">
    <property type="entry name" value="Acetyl_CoA_COase_a_su"/>
</dbReference>
<dbReference type="InterPro" id="IPR029045">
    <property type="entry name" value="ClpP/crotonase-like_dom_sf"/>
</dbReference>
<dbReference type="InterPro" id="IPR011763">
    <property type="entry name" value="COA_CT_C"/>
</dbReference>
<dbReference type="NCBIfam" id="TIGR00513">
    <property type="entry name" value="accA"/>
    <property type="match status" value="1"/>
</dbReference>
<dbReference type="NCBIfam" id="NF041504">
    <property type="entry name" value="AccA_sub"/>
    <property type="match status" value="1"/>
</dbReference>
<dbReference type="NCBIfam" id="NF004344">
    <property type="entry name" value="PRK05724.1"/>
    <property type="match status" value="1"/>
</dbReference>
<dbReference type="PANTHER" id="PTHR42853">
    <property type="entry name" value="ACETYL-COENZYME A CARBOXYLASE CARBOXYL TRANSFERASE SUBUNIT ALPHA"/>
    <property type="match status" value="1"/>
</dbReference>
<dbReference type="PANTHER" id="PTHR42853:SF3">
    <property type="entry name" value="ACETYL-COENZYME A CARBOXYLASE CARBOXYL TRANSFERASE SUBUNIT ALPHA, CHLOROPLASTIC"/>
    <property type="match status" value="1"/>
</dbReference>
<dbReference type="Pfam" id="PF03255">
    <property type="entry name" value="ACCA"/>
    <property type="match status" value="1"/>
</dbReference>
<dbReference type="PRINTS" id="PR01069">
    <property type="entry name" value="ACCCTRFRASEA"/>
</dbReference>
<dbReference type="SUPFAM" id="SSF52096">
    <property type="entry name" value="ClpP/crotonase"/>
    <property type="match status" value="1"/>
</dbReference>
<dbReference type="PROSITE" id="PS50989">
    <property type="entry name" value="COA_CT_CTER"/>
    <property type="match status" value="1"/>
</dbReference>
<organism>
    <name type="scientific">Listeria welshimeri serovar 6b (strain ATCC 35897 / DSM 20650 / CCUG 15529 / CIP 8149 / NCTC 11857 / SLCC 5334 / V8)</name>
    <dbReference type="NCBI Taxonomy" id="386043"/>
    <lineage>
        <taxon>Bacteria</taxon>
        <taxon>Bacillati</taxon>
        <taxon>Bacillota</taxon>
        <taxon>Bacilli</taxon>
        <taxon>Bacillales</taxon>
        <taxon>Listeriaceae</taxon>
        <taxon>Listeria</taxon>
    </lineage>
</organism>
<reference key="1">
    <citation type="journal article" date="2006" name="J. Bacteriol.">
        <title>Whole-genome sequence of Listeria welshimeri reveals common steps in genome reduction with Listeria innocua as compared to Listeria monocytogenes.</title>
        <authorList>
            <person name="Hain T."/>
            <person name="Steinweg C."/>
            <person name="Kuenne C.T."/>
            <person name="Billion A."/>
            <person name="Ghai R."/>
            <person name="Chatterjee S.S."/>
            <person name="Domann E."/>
            <person name="Kaerst U."/>
            <person name="Goesmann A."/>
            <person name="Bekel T."/>
            <person name="Bartels D."/>
            <person name="Kaiser O."/>
            <person name="Meyer F."/>
            <person name="Puehler A."/>
            <person name="Weisshaar B."/>
            <person name="Wehland J."/>
            <person name="Liang C."/>
            <person name="Dandekar T."/>
            <person name="Lampidis R."/>
            <person name="Kreft J."/>
            <person name="Goebel W."/>
            <person name="Chakraborty T."/>
        </authorList>
    </citation>
    <scope>NUCLEOTIDE SEQUENCE [LARGE SCALE GENOMIC DNA]</scope>
    <source>
        <strain>ATCC 35897 / DSM 20650 / CCUG 15529 / CIP 8149 / NCTC 11857 / SLCC 5334 / V8</strain>
    </source>
</reference>
<keyword id="KW-0067">ATP-binding</keyword>
<keyword id="KW-0963">Cytoplasm</keyword>
<keyword id="KW-0275">Fatty acid biosynthesis</keyword>
<keyword id="KW-0276">Fatty acid metabolism</keyword>
<keyword id="KW-0444">Lipid biosynthesis</keyword>
<keyword id="KW-0443">Lipid metabolism</keyword>
<keyword id="KW-0547">Nucleotide-binding</keyword>
<keyword id="KW-0808">Transferase</keyword>
<gene>
    <name evidence="1" type="primary">accA</name>
    <name type="ordered locus">lwe1585</name>
</gene>
<feature type="chain" id="PRO_1000062635" description="Acetyl-coenzyme A carboxylase carboxyl transferase subunit alpha">
    <location>
        <begin position="1"/>
        <end position="318"/>
    </location>
</feature>
<feature type="domain" description="CoA carboxyltransferase C-terminal" evidence="2">
    <location>
        <begin position="38"/>
        <end position="292"/>
    </location>
</feature>
<sequence>MANEMEFEKPILELKSKIADLKEYNETSDVDLTNEIEKLEKRLAKLEASVYSNMTAWDKFQVARHPERPTTLDYISLLFEDFMELHGDRAFGDDAAIVGGVATFNGIPVTVIGHQRGKDTKDNLHRNFGMPHPEGFRKALRLMKQADKFGRPIICFIDTKGAYPGRAAEERGQSEAIARNLYEMSDMKVPIISIVIGEGGSGGALALGVGNQIFMLENAVFSVISPEGAAAILWKDAGQAKKAAESMRITADDLFELGITDGIIPEVKGGAHRDLTAQAAEINKTITKSLHALMAFSEEQLMNQRYEKFKKIGVYEIL</sequence>
<protein>
    <recommendedName>
        <fullName evidence="1">Acetyl-coenzyme A carboxylase carboxyl transferase subunit alpha</fullName>
        <shortName evidence="1">ACCase subunit alpha</shortName>
        <shortName evidence="1">Acetyl-CoA carboxylase carboxyltransferase subunit alpha</shortName>
        <ecNumber evidence="1">2.1.3.15</ecNumber>
    </recommendedName>
</protein>
<evidence type="ECO:0000255" key="1">
    <source>
        <dbReference type="HAMAP-Rule" id="MF_00823"/>
    </source>
</evidence>
<evidence type="ECO:0000255" key="2">
    <source>
        <dbReference type="PROSITE-ProRule" id="PRU01137"/>
    </source>
</evidence>
<comment type="function">
    <text evidence="1">Component of the acetyl coenzyme A carboxylase (ACC) complex. First, biotin carboxylase catalyzes the carboxylation of biotin on its carrier protein (BCCP) and then the CO(2) group is transferred by the carboxyltransferase to acetyl-CoA to form malonyl-CoA.</text>
</comment>
<comment type="catalytic activity">
    <reaction evidence="1">
        <text>N(6)-carboxybiotinyl-L-lysyl-[protein] + acetyl-CoA = N(6)-biotinyl-L-lysyl-[protein] + malonyl-CoA</text>
        <dbReference type="Rhea" id="RHEA:54728"/>
        <dbReference type="Rhea" id="RHEA-COMP:10505"/>
        <dbReference type="Rhea" id="RHEA-COMP:10506"/>
        <dbReference type="ChEBI" id="CHEBI:57288"/>
        <dbReference type="ChEBI" id="CHEBI:57384"/>
        <dbReference type="ChEBI" id="CHEBI:83144"/>
        <dbReference type="ChEBI" id="CHEBI:83145"/>
        <dbReference type="EC" id="2.1.3.15"/>
    </reaction>
</comment>
<comment type="pathway">
    <text evidence="1">Lipid metabolism; malonyl-CoA biosynthesis; malonyl-CoA from acetyl-CoA: step 1/1.</text>
</comment>
<comment type="subunit">
    <text evidence="1">Acetyl-CoA carboxylase is a heterohexamer composed of biotin carboxyl carrier protein (AccB), biotin carboxylase (AccC) and two subunits each of ACCase subunit alpha (AccA) and ACCase subunit beta (AccD).</text>
</comment>
<comment type="subcellular location">
    <subcellularLocation>
        <location evidence="1">Cytoplasm</location>
    </subcellularLocation>
</comment>
<comment type="similarity">
    <text evidence="1">Belongs to the AccA family.</text>
</comment>
<name>ACCA_LISW6</name>
<accession>A0AJ21</accession>